<evidence type="ECO:0000255" key="1">
    <source>
        <dbReference type="HAMAP-Rule" id="MF_01306"/>
    </source>
</evidence>
<evidence type="ECO:0000305" key="2"/>
<sequence length="201" mass="23476">MARYTGPVTRKSRRLRTDLVGGDQAFEKRPYPPGQHGRARIKESEYLLQLQEKQKARFTYGVMEKQFRRYYEEAVRQPGKTGEELLKILESRLDNVIYRAGLARTRRMARQLVSHGHFNVNGVHVNVPSYRVSQYDIVDVRDKSLNTVPFQIARETAGERPIPSWLQVVGERQRVLIHQLPERAQIDVPLTEQLIVEYYSK</sequence>
<feature type="chain" id="PRO_0000322312" description="Small ribosomal subunit protein uS4">
    <location>
        <begin position="1"/>
        <end position="201"/>
    </location>
</feature>
<feature type="domain" description="S4 RNA-binding" evidence="1">
    <location>
        <begin position="91"/>
        <end position="157"/>
    </location>
</feature>
<name>RS4_MYCTA</name>
<comment type="function">
    <text evidence="1">One of the primary rRNA binding proteins, it binds directly to 16S rRNA where it nucleates assembly of the body of the 30S subunit.</text>
</comment>
<comment type="function">
    <text evidence="1">With S5 and S12 plays an important role in translational accuracy.</text>
</comment>
<comment type="subunit">
    <text evidence="1">Part of the 30S ribosomal subunit. Contacts protein S5. The interaction surface between S4 and S5 is involved in control of translational fidelity.</text>
</comment>
<comment type="similarity">
    <text evidence="1">Belongs to the universal ribosomal protein uS4 family.</text>
</comment>
<dbReference type="EMBL" id="CP000611">
    <property type="protein sequence ID" value="ABQ75284.1"/>
    <property type="molecule type" value="Genomic_DNA"/>
</dbReference>
<dbReference type="RefSeq" id="WP_003418354.1">
    <property type="nucleotide sequence ID" value="NZ_CP016972.1"/>
</dbReference>
<dbReference type="SMR" id="A5U8D4"/>
<dbReference type="GeneID" id="45427447"/>
<dbReference type="KEGG" id="mra:MRA_3499"/>
<dbReference type="eggNOG" id="COG0522">
    <property type="taxonomic scope" value="Bacteria"/>
</dbReference>
<dbReference type="HOGENOM" id="CLU_092403_0_2_11"/>
<dbReference type="Proteomes" id="UP000001988">
    <property type="component" value="Chromosome"/>
</dbReference>
<dbReference type="GO" id="GO:0015935">
    <property type="term" value="C:small ribosomal subunit"/>
    <property type="evidence" value="ECO:0007669"/>
    <property type="project" value="InterPro"/>
</dbReference>
<dbReference type="GO" id="GO:0019843">
    <property type="term" value="F:rRNA binding"/>
    <property type="evidence" value="ECO:0007669"/>
    <property type="project" value="UniProtKB-UniRule"/>
</dbReference>
<dbReference type="GO" id="GO:0003735">
    <property type="term" value="F:structural constituent of ribosome"/>
    <property type="evidence" value="ECO:0007669"/>
    <property type="project" value="InterPro"/>
</dbReference>
<dbReference type="GO" id="GO:0042274">
    <property type="term" value="P:ribosomal small subunit biogenesis"/>
    <property type="evidence" value="ECO:0007669"/>
    <property type="project" value="TreeGrafter"/>
</dbReference>
<dbReference type="GO" id="GO:0006412">
    <property type="term" value="P:translation"/>
    <property type="evidence" value="ECO:0007669"/>
    <property type="project" value="UniProtKB-UniRule"/>
</dbReference>
<dbReference type="CDD" id="cd00165">
    <property type="entry name" value="S4"/>
    <property type="match status" value="1"/>
</dbReference>
<dbReference type="FunFam" id="3.10.290.10:FF:000001">
    <property type="entry name" value="30S ribosomal protein S4"/>
    <property type="match status" value="1"/>
</dbReference>
<dbReference type="Gene3D" id="1.10.1050.10">
    <property type="entry name" value="Ribosomal Protein S4 Delta 41, Chain A, domain 1"/>
    <property type="match status" value="1"/>
</dbReference>
<dbReference type="Gene3D" id="3.10.290.10">
    <property type="entry name" value="RNA-binding S4 domain"/>
    <property type="match status" value="1"/>
</dbReference>
<dbReference type="HAMAP" id="MF_01306_B">
    <property type="entry name" value="Ribosomal_uS4_B"/>
    <property type="match status" value="1"/>
</dbReference>
<dbReference type="InterPro" id="IPR022801">
    <property type="entry name" value="Ribosomal_uS4"/>
</dbReference>
<dbReference type="InterPro" id="IPR005709">
    <property type="entry name" value="Ribosomal_uS4_bac-type"/>
</dbReference>
<dbReference type="InterPro" id="IPR018079">
    <property type="entry name" value="Ribosomal_uS4_CS"/>
</dbReference>
<dbReference type="InterPro" id="IPR001912">
    <property type="entry name" value="Ribosomal_uS4_N"/>
</dbReference>
<dbReference type="InterPro" id="IPR002942">
    <property type="entry name" value="S4_RNA-bd"/>
</dbReference>
<dbReference type="InterPro" id="IPR036986">
    <property type="entry name" value="S4_RNA-bd_sf"/>
</dbReference>
<dbReference type="NCBIfam" id="NF003717">
    <property type="entry name" value="PRK05327.1"/>
    <property type="match status" value="1"/>
</dbReference>
<dbReference type="NCBIfam" id="TIGR01017">
    <property type="entry name" value="rpsD_bact"/>
    <property type="match status" value="1"/>
</dbReference>
<dbReference type="PANTHER" id="PTHR11831">
    <property type="entry name" value="30S 40S RIBOSOMAL PROTEIN"/>
    <property type="match status" value="1"/>
</dbReference>
<dbReference type="PANTHER" id="PTHR11831:SF4">
    <property type="entry name" value="SMALL RIBOSOMAL SUBUNIT PROTEIN US4M"/>
    <property type="match status" value="1"/>
</dbReference>
<dbReference type="Pfam" id="PF00163">
    <property type="entry name" value="Ribosomal_S4"/>
    <property type="match status" value="1"/>
</dbReference>
<dbReference type="Pfam" id="PF01479">
    <property type="entry name" value="S4"/>
    <property type="match status" value="1"/>
</dbReference>
<dbReference type="SMART" id="SM01390">
    <property type="entry name" value="Ribosomal_S4"/>
    <property type="match status" value="1"/>
</dbReference>
<dbReference type="SMART" id="SM00363">
    <property type="entry name" value="S4"/>
    <property type="match status" value="1"/>
</dbReference>
<dbReference type="SUPFAM" id="SSF55174">
    <property type="entry name" value="Alpha-L RNA-binding motif"/>
    <property type="match status" value="1"/>
</dbReference>
<dbReference type="PROSITE" id="PS00632">
    <property type="entry name" value="RIBOSOMAL_S4"/>
    <property type="match status" value="1"/>
</dbReference>
<dbReference type="PROSITE" id="PS50889">
    <property type="entry name" value="S4"/>
    <property type="match status" value="1"/>
</dbReference>
<organism>
    <name type="scientific">Mycobacterium tuberculosis (strain ATCC 25177 / H37Ra)</name>
    <dbReference type="NCBI Taxonomy" id="419947"/>
    <lineage>
        <taxon>Bacteria</taxon>
        <taxon>Bacillati</taxon>
        <taxon>Actinomycetota</taxon>
        <taxon>Actinomycetes</taxon>
        <taxon>Mycobacteriales</taxon>
        <taxon>Mycobacteriaceae</taxon>
        <taxon>Mycobacterium</taxon>
        <taxon>Mycobacterium tuberculosis complex</taxon>
    </lineage>
</organism>
<keyword id="KW-1185">Reference proteome</keyword>
<keyword id="KW-0687">Ribonucleoprotein</keyword>
<keyword id="KW-0689">Ribosomal protein</keyword>
<keyword id="KW-0694">RNA-binding</keyword>
<keyword id="KW-0699">rRNA-binding</keyword>
<reference key="1">
    <citation type="journal article" date="2008" name="PLoS ONE">
        <title>Genetic basis of virulence attenuation revealed by comparative genomic analysis of Mycobacterium tuberculosis strain H37Ra versus H37Rv.</title>
        <authorList>
            <person name="Zheng H."/>
            <person name="Lu L."/>
            <person name="Wang B."/>
            <person name="Pu S."/>
            <person name="Zhang X."/>
            <person name="Zhu G."/>
            <person name="Shi W."/>
            <person name="Zhang L."/>
            <person name="Wang H."/>
            <person name="Wang S."/>
            <person name="Zhao G."/>
            <person name="Zhang Y."/>
        </authorList>
    </citation>
    <scope>NUCLEOTIDE SEQUENCE [LARGE SCALE GENOMIC DNA]</scope>
    <source>
        <strain>ATCC 25177 / H37Ra</strain>
    </source>
</reference>
<proteinExistence type="inferred from homology"/>
<accession>A5U8D4</accession>
<protein>
    <recommendedName>
        <fullName evidence="1">Small ribosomal subunit protein uS4</fullName>
    </recommendedName>
    <alternativeName>
        <fullName evidence="2">30S ribosomal protein S4</fullName>
    </alternativeName>
</protein>
<gene>
    <name evidence="1" type="primary">rpsD</name>
    <name type="ordered locus">MRA_3499</name>
</gene>